<sequence length="482" mass="55003">MKFIIKLFPEITIKSQSVRLRFIKILTGNIRNVLKHYDETLAVVRHWDNIEVRAKDENQRLTIRDALTRIPGIHHILEVEDVPFTDMHDIFEKALVQYRDQLDGKTFCVRVKRRGKHDFSSIDVERYVGGGLNQHIESARVKLTNPDVTVHLEVEDDRLLLIKGRYEGIGGFPIGTQEDVLSLISGGFDSGVSSYMLMRRGCRVHYCFFNLGGAAHEIGVRQVAHYLWNRFGSSHRVRFVAINFEPVVGEILEKIDDGQMGVILKRMMVRAASKVAERYGVQALVTGEALGQVSSQTLTNLRLIDNVSDTLILRPLISYDKEHIINLARQIGTEDFARTMPEYCGVISKSPTVKAVKSKIEAEEEKFDFSILDKVVEEANNVDIREIAQQTGQEVVEVETVNDFGPNDVILDIRSVDEQEDKPLKVEGIDVVSLPFYKLSTKFGDLDQNRTWLLWCERGVMSRLQALYLREQGFKNVKVYRP</sequence>
<reference key="1">
    <citation type="journal article" date="2001" name="Nature">
        <title>Genome sequence of enterohaemorrhagic Escherichia coli O157:H7.</title>
        <authorList>
            <person name="Perna N.T."/>
            <person name="Plunkett G. III"/>
            <person name="Burland V."/>
            <person name="Mau B."/>
            <person name="Glasner J.D."/>
            <person name="Rose D.J."/>
            <person name="Mayhew G.F."/>
            <person name="Evans P.S."/>
            <person name="Gregor J."/>
            <person name="Kirkpatrick H.A."/>
            <person name="Posfai G."/>
            <person name="Hackett J."/>
            <person name="Klink S."/>
            <person name="Boutin A."/>
            <person name="Shao Y."/>
            <person name="Miller L."/>
            <person name="Grotbeck E.J."/>
            <person name="Davis N.W."/>
            <person name="Lim A."/>
            <person name="Dimalanta E.T."/>
            <person name="Potamousis K."/>
            <person name="Apodaca J."/>
            <person name="Anantharaman T.S."/>
            <person name="Lin J."/>
            <person name="Yen G."/>
            <person name="Schwartz D.C."/>
            <person name="Welch R.A."/>
            <person name="Blattner F.R."/>
        </authorList>
    </citation>
    <scope>NUCLEOTIDE SEQUENCE [LARGE SCALE GENOMIC DNA]</scope>
    <source>
        <strain>O157:H7 / EDL933 / ATCC 700927 / EHEC</strain>
    </source>
</reference>
<reference key="2">
    <citation type="journal article" date="2001" name="DNA Res.">
        <title>Complete genome sequence of enterohemorrhagic Escherichia coli O157:H7 and genomic comparison with a laboratory strain K-12.</title>
        <authorList>
            <person name="Hayashi T."/>
            <person name="Makino K."/>
            <person name="Ohnishi M."/>
            <person name="Kurokawa K."/>
            <person name="Ishii K."/>
            <person name="Yokoyama K."/>
            <person name="Han C.-G."/>
            <person name="Ohtsubo E."/>
            <person name="Nakayama K."/>
            <person name="Murata T."/>
            <person name="Tanaka M."/>
            <person name="Tobe T."/>
            <person name="Iida T."/>
            <person name="Takami H."/>
            <person name="Honda T."/>
            <person name="Sasakawa C."/>
            <person name="Ogasawara N."/>
            <person name="Yasunaga T."/>
            <person name="Kuhara S."/>
            <person name="Shiba T."/>
            <person name="Hattori M."/>
            <person name="Shinagawa H."/>
        </authorList>
    </citation>
    <scope>NUCLEOTIDE SEQUENCE [LARGE SCALE GENOMIC DNA]</scope>
    <source>
        <strain>O157:H7 / Sakai / RIMD 0509952 / EHEC</strain>
    </source>
</reference>
<reference key="3">
    <citation type="journal article" date="2010" name="PLoS Biol.">
        <title>Structural basis for Fe-S cluster assembly and tRNA thiolation mediated by IscS protein-protein interactions.</title>
        <authorList>
            <person name="Shi R."/>
            <person name="Proteau A."/>
            <person name="Villarroya M."/>
            <person name="Moukadiri I."/>
            <person name="Zhang L."/>
            <person name="Trempe J.F."/>
            <person name="Matte A."/>
            <person name="Armengod M.E."/>
            <person name="Cygler M."/>
        </authorList>
    </citation>
    <scope>INTERACTION WITH ISCS</scope>
    <scope>SUBUNIT</scope>
    <source>
        <strain>O157:H7 / EDL933 / ATCC 700927 / EHEC</strain>
    </source>
</reference>
<keyword id="KW-0067">ATP-binding</keyword>
<keyword id="KW-0963">Cytoplasm</keyword>
<keyword id="KW-1015">Disulfide bond</keyword>
<keyword id="KW-0547">Nucleotide-binding</keyword>
<keyword id="KW-0676">Redox-active center</keyword>
<keyword id="KW-1185">Reference proteome</keyword>
<keyword id="KW-0694">RNA-binding</keyword>
<keyword id="KW-0784">Thiamine biosynthesis</keyword>
<keyword id="KW-0808">Transferase</keyword>
<keyword id="KW-0820">tRNA-binding</keyword>
<organism>
    <name type="scientific">Escherichia coli O157:H7</name>
    <dbReference type="NCBI Taxonomy" id="83334"/>
    <lineage>
        <taxon>Bacteria</taxon>
        <taxon>Pseudomonadati</taxon>
        <taxon>Pseudomonadota</taxon>
        <taxon>Gammaproteobacteria</taxon>
        <taxon>Enterobacterales</taxon>
        <taxon>Enterobacteriaceae</taxon>
        <taxon>Escherichia</taxon>
    </lineage>
</organism>
<name>THII_ECO57</name>
<comment type="function">
    <text evidence="1">Catalyzes the ATP-dependent transfer of a sulfur to tRNA to produce 4-thiouridine in position 8 of tRNAs, which functions as a near-UV photosensor. Also catalyzes the transfer of sulfur to the sulfur carrier protein ThiS, forming ThiS-thiocarboxylate. This is a step in the synthesis of thiazole, in the thiamine biosynthesis pathway. The sulfur is donated as persulfide by IscS.</text>
</comment>
<comment type="catalytic activity">
    <reaction evidence="1">
        <text>[ThiI sulfur-carrier protein]-S-sulfanyl-L-cysteine + a uridine in tRNA + 2 reduced [2Fe-2S]-[ferredoxin] + ATP + H(+) = [ThiI sulfur-carrier protein]-L-cysteine + a 4-thiouridine in tRNA + 2 oxidized [2Fe-2S]-[ferredoxin] + AMP + diphosphate</text>
        <dbReference type="Rhea" id="RHEA:24176"/>
        <dbReference type="Rhea" id="RHEA-COMP:10000"/>
        <dbReference type="Rhea" id="RHEA-COMP:10001"/>
        <dbReference type="Rhea" id="RHEA-COMP:13337"/>
        <dbReference type="Rhea" id="RHEA-COMP:13338"/>
        <dbReference type="Rhea" id="RHEA-COMP:13339"/>
        <dbReference type="Rhea" id="RHEA-COMP:13340"/>
        <dbReference type="ChEBI" id="CHEBI:15378"/>
        <dbReference type="ChEBI" id="CHEBI:29950"/>
        <dbReference type="ChEBI" id="CHEBI:30616"/>
        <dbReference type="ChEBI" id="CHEBI:33019"/>
        <dbReference type="ChEBI" id="CHEBI:33737"/>
        <dbReference type="ChEBI" id="CHEBI:33738"/>
        <dbReference type="ChEBI" id="CHEBI:61963"/>
        <dbReference type="ChEBI" id="CHEBI:65315"/>
        <dbReference type="ChEBI" id="CHEBI:136798"/>
        <dbReference type="ChEBI" id="CHEBI:456215"/>
        <dbReference type="EC" id="2.8.1.4"/>
    </reaction>
</comment>
<comment type="catalytic activity">
    <reaction evidence="1">
        <text>[ThiS sulfur-carrier protein]-C-terminal Gly-Gly-AMP + S-sulfanyl-L-cysteinyl-[cysteine desulfurase] + AH2 = [ThiS sulfur-carrier protein]-C-terminal-Gly-aminoethanethioate + L-cysteinyl-[cysteine desulfurase] + A + AMP + 2 H(+)</text>
        <dbReference type="Rhea" id="RHEA:43340"/>
        <dbReference type="Rhea" id="RHEA-COMP:12157"/>
        <dbReference type="Rhea" id="RHEA-COMP:12158"/>
        <dbReference type="Rhea" id="RHEA-COMP:12910"/>
        <dbReference type="Rhea" id="RHEA-COMP:19908"/>
        <dbReference type="ChEBI" id="CHEBI:13193"/>
        <dbReference type="ChEBI" id="CHEBI:15378"/>
        <dbReference type="ChEBI" id="CHEBI:17499"/>
        <dbReference type="ChEBI" id="CHEBI:29950"/>
        <dbReference type="ChEBI" id="CHEBI:61963"/>
        <dbReference type="ChEBI" id="CHEBI:90618"/>
        <dbReference type="ChEBI" id="CHEBI:232372"/>
        <dbReference type="ChEBI" id="CHEBI:456215"/>
    </reaction>
</comment>
<comment type="pathway">
    <text evidence="1">Cofactor biosynthesis; thiamine diphosphate biosynthesis.</text>
</comment>
<comment type="subunit">
    <text evidence="2">Interacts with IscS.</text>
</comment>
<comment type="subcellular location">
    <subcellularLocation>
        <location evidence="1">Cytoplasm</location>
    </subcellularLocation>
</comment>
<comment type="similarity">
    <text evidence="1">Belongs to the ThiI family.</text>
</comment>
<protein>
    <recommendedName>
        <fullName evidence="1">tRNA sulfurtransferase</fullName>
        <ecNumber evidence="1">2.8.1.4</ecNumber>
    </recommendedName>
    <alternativeName>
        <fullName evidence="1">Sulfur carrier protein ThiS sulfurtransferase</fullName>
    </alternativeName>
    <alternativeName>
        <fullName evidence="1">Thiamine biosynthesis protein ThiI</fullName>
    </alternativeName>
    <alternativeName>
        <fullName evidence="1">tRNA 4-thiouridine synthase</fullName>
    </alternativeName>
</protein>
<evidence type="ECO:0000255" key="1">
    <source>
        <dbReference type="HAMAP-Rule" id="MF_00021"/>
    </source>
</evidence>
<evidence type="ECO:0000269" key="2">
    <source>
    </source>
</evidence>
<gene>
    <name evidence="1" type="primary">thiI</name>
    <name type="ordered locus">Z0526</name>
    <name type="ordered locus">ECs0477</name>
</gene>
<proteinExistence type="evidence at protein level"/>
<feature type="chain" id="PRO_0000154838" description="tRNA sulfurtransferase">
    <location>
        <begin position="1"/>
        <end position="482"/>
    </location>
</feature>
<feature type="domain" description="THUMP" evidence="1">
    <location>
        <begin position="61"/>
        <end position="165"/>
    </location>
</feature>
<feature type="domain" description="Rhodanese" evidence="1">
    <location>
        <begin position="404"/>
        <end position="482"/>
    </location>
</feature>
<feature type="active site" description="Cysteine persulfide intermediate" evidence="1">
    <location>
        <position position="456"/>
    </location>
</feature>
<feature type="binding site" evidence="1">
    <location>
        <begin position="183"/>
        <end position="184"/>
    </location>
    <ligand>
        <name>ATP</name>
        <dbReference type="ChEBI" id="CHEBI:30616"/>
    </ligand>
</feature>
<feature type="binding site" evidence="1">
    <location>
        <position position="265"/>
    </location>
    <ligand>
        <name>ATP</name>
        <dbReference type="ChEBI" id="CHEBI:30616"/>
    </ligand>
</feature>
<feature type="binding site" evidence="1">
    <location>
        <position position="287"/>
    </location>
    <ligand>
        <name>ATP</name>
        <dbReference type="ChEBI" id="CHEBI:30616"/>
    </ligand>
</feature>
<feature type="binding site" evidence="1">
    <location>
        <position position="296"/>
    </location>
    <ligand>
        <name>ATP</name>
        <dbReference type="ChEBI" id="CHEBI:30616"/>
    </ligand>
</feature>
<feature type="disulfide bond" description="Redox-active" evidence="1">
    <location>
        <begin position="344"/>
        <end position="456"/>
    </location>
</feature>
<accession>Q8XE74</accession>
<dbReference type="EC" id="2.8.1.4" evidence="1"/>
<dbReference type="EMBL" id="AE005174">
    <property type="protein sequence ID" value="AAG54773.1"/>
    <property type="molecule type" value="Genomic_DNA"/>
</dbReference>
<dbReference type="EMBL" id="BA000007">
    <property type="protein sequence ID" value="BAB33900.1"/>
    <property type="molecule type" value="Genomic_DNA"/>
</dbReference>
<dbReference type="PIR" id="A85539">
    <property type="entry name" value="A85539"/>
</dbReference>
<dbReference type="PIR" id="E90688">
    <property type="entry name" value="E90688"/>
</dbReference>
<dbReference type="RefSeq" id="NP_308504.1">
    <property type="nucleotide sequence ID" value="NC_002695.1"/>
</dbReference>
<dbReference type="RefSeq" id="WP_000668700.1">
    <property type="nucleotide sequence ID" value="NZ_VOAI01000005.1"/>
</dbReference>
<dbReference type="SMR" id="Q8XE74"/>
<dbReference type="DIP" id="DIP-58576N"/>
<dbReference type="IntAct" id="Q8XE74">
    <property type="interactions" value="1"/>
</dbReference>
<dbReference type="STRING" id="155864.Z0526"/>
<dbReference type="GeneID" id="914579"/>
<dbReference type="KEGG" id="ece:Z0526"/>
<dbReference type="KEGG" id="ecs:ECs_0477"/>
<dbReference type="PATRIC" id="fig|386585.9.peg.578"/>
<dbReference type="eggNOG" id="COG0301">
    <property type="taxonomic scope" value="Bacteria"/>
</dbReference>
<dbReference type="eggNOG" id="COG0607">
    <property type="taxonomic scope" value="Bacteria"/>
</dbReference>
<dbReference type="HOGENOM" id="CLU_037952_4_1_6"/>
<dbReference type="OMA" id="SMPEFCG"/>
<dbReference type="UniPathway" id="UPA00060"/>
<dbReference type="Proteomes" id="UP000000558">
    <property type="component" value="Chromosome"/>
</dbReference>
<dbReference type="Proteomes" id="UP000002519">
    <property type="component" value="Chromosome"/>
</dbReference>
<dbReference type="GO" id="GO:0005829">
    <property type="term" value="C:cytosol"/>
    <property type="evidence" value="ECO:0007669"/>
    <property type="project" value="TreeGrafter"/>
</dbReference>
<dbReference type="GO" id="GO:0005524">
    <property type="term" value="F:ATP binding"/>
    <property type="evidence" value="ECO:0007669"/>
    <property type="project" value="UniProtKB-UniRule"/>
</dbReference>
<dbReference type="GO" id="GO:0004810">
    <property type="term" value="F:CCA tRNA nucleotidyltransferase activity"/>
    <property type="evidence" value="ECO:0007669"/>
    <property type="project" value="InterPro"/>
</dbReference>
<dbReference type="GO" id="GO:0000049">
    <property type="term" value="F:tRNA binding"/>
    <property type="evidence" value="ECO:0007669"/>
    <property type="project" value="UniProtKB-UniRule"/>
</dbReference>
<dbReference type="GO" id="GO:0140741">
    <property type="term" value="F:tRNA-uracil-4 sulfurtransferase activity"/>
    <property type="evidence" value="ECO:0007669"/>
    <property type="project" value="UniProtKB-EC"/>
</dbReference>
<dbReference type="GO" id="GO:0009228">
    <property type="term" value="P:thiamine biosynthetic process"/>
    <property type="evidence" value="ECO:0007669"/>
    <property type="project" value="UniProtKB-KW"/>
</dbReference>
<dbReference type="GO" id="GO:0009229">
    <property type="term" value="P:thiamine diphosphate biosynthetic process"/>
    <property type="evidence" value="ECO:0007669"/>
    <property type="project" value="UniProtKB-UniRule"/>
</dbReference>
<dbReference type="GO" id="GO:0052837">
    <property type="term" value="P:thiazole biosynthetic process"/>
    <property type="evidence" value="ECO:0007669"/>
    <property type="project" value="InterPro"/>
</dbReference>
<dbReference type="GO" id="GO:0002937">
    <property type="term" value="P:tRNA 4-thiouridine biosynthesis"/>
    <property type="evidence" value="ECO:0007669"/>
    <property type="project" value="TreeGrafter"/>
</dbReference>
<dbReference type="CDD" id="cd01712">
    <property type="entry name" value="PPase_ThiI"/>
    <property type="match status" value="1"/>
</dbReference>
<dbReference type="CDD" id="cd00158">
    <property type="entry name" value="RHOD"/>
    <property type="match status" value="1"/>
</dbReference>
<dbReference type="CDD" id="cd11716">
    <property type="entry name" value="THUMP_ThiI"/>
    <property type="match status" value="1"/>
</dbReference>
<dbReference type="FunFam" id="3.30.2130.30:FF:000002">
    <property type="entry name" value="tRNA sulfurtransferase"/>
    <property type="match status" value="1"/>
</dbReference>
<dbReference type="FunFam" id="3.40.250.10:FF:000003">
    <property type="entry name" value="tRNA sulfurtransferase"/>
    <property type="match status" value="1"/>
</dbReference>
<dbReference type="FunFam" id="3.40.50.620:FF:000029">
    <property type="entry name" value="tRNA sulfurtransferase"/>
    <property type="match status" value="1"/>
</dbReference>
<dbReference type="Gene3D" id="3.30.2130.30">
    <property type="match status" value="1"/>
</dbReference>
<dbReference type="Gene3D" id="3.40.50.620">
    <property type="entry name" value="HUPs"/>
    <property type="match status" value="1"/>
</dbReference>
<dbReference type="Gene3D" id="3.40.250.10">
    <property type="entry name" value="Rhodanese-like domain"/>
    <property type="match status" value="1"/>
</dbReference>
<dbReference type="HAMAP" id="MF_00021">
    <property type="entry name" value="ThiI"/>
    <property type="match status" value="1"/>
</dbReference>
<dbReference type="InterPro" id="IPR001763">
    <property type="entry name" value="Rhodanese-like_dom"/>
</dbReference>
<dbReference type="InterPro" id="IPR036873">
    <property type="entry name" value="Rhodanese-like_dom_sf"/>
</dbReference>
<dbReference type="InterPro" id="IPR014729">
    <property type="entry name" value="Rossmann-like_a/b/a_fold"/>
</dbReference>
<dbReference type="InterPro" id="IPR020536">
    <property type="entry name" value="ThiI_AANH"/>
</dbReference>
<dbReference type="InterPro" id="IPR054173">
    <property type="entry name" value="ThiI_fer"/>
</dbReference>
<dbReference type="InterPro" id="IPR049961">
    <property type="entry name" value="ThiI_N"/>
</dbReference>
<dbReference type="InterPro" id="IPR026340">
    <property type="entry name" value="THII_Thiazole_biosynth_dom"/>
</dbReference>
<dbReference type="InterPro" id="IPR004114">
    <property type="entry name" value="THUMP_dom"/>
</dbReference>
<dbReference type="InterPro" id="IPR049962">
    <property type="entry name" value="THUMP_ThiI"/>
</dbReference>
<dbReference type="InterPro" id="IPR003720">
    <property type="entry name" value="tRNA_STrfase"/>
</dbReference>
<dbReference type="InterPro" id="IPR050102">
    <property type="entry name" value="tRNA_sulfurtransferase_ThiI"/>
</dbReference>
<dbReference type="NCBIfam" id="TIGR04271">
    <property type="entry name" value="ThiI_C_thiazole"/>
    <property type="match status" value="1"/>
</dbReference>
<dbReference type="NCBIfam" id="TIGR00342">
    <property type="entry name" value="tRNA uracil 4-sulfurtransferase ThiI"/>
    <property type="match status" value="1"/>
</dbReference>
<dbReference type="PANTHER" id="PTHR43209">
    <property type="entry name" value="TRNA SULFURTRANSFERASE"/>
    <property type="match status" value="1"/>
</dbReference>
<dbReference type="PANTHER" id="PTHR43209:SF1">
    <property type="entry name" value="TRNA SULFURTRANSFERASE"/>
    <property type="match status" value="1"/>
</dbReference>
<dbReference type="Pfam" id="PF02568">
    <property type="entry name" value="ThiI"/>
    <property type="match status" value="1"/>
</dbReference>
<dbReference type="Pfam" id="PF22025">
    <property type="entry name" value="ThiI_fer"/>
    <property type="match status" value="1"/>
</dbReference>
<dbReference type="Pfam" id="PF02926">
    <property type="entry name" value="THUMP"/>
    <property type="match status" value="1"/>
</dbReference>
<dbReference type="SMART" id="SM00981">
    <property type="entry name" value="THUMP"/>
    <property type="match status" value="1"/>
</dbReference>
<dbReference type="SUPFAM" id="SSF52402">
    <property type="entry name" value="Adenine nucleotide alpha hydrolases-like"/>
    <property type="match status" value="1"/>
</dbReference>
<dbReference type="SUPFAM" id="SSF52821">
    <property type="entry name" value="Rhodanese/Cell cycle control phosphatase"/>
    <property type="match status" value="1"/>
</dbReference>
<dbReference type="SUPFAM" id="SSF143437">
    <property type="entry name" value="THUMP domain-like"/>
    <property type="match status" value="1"/>
</dbReference>
<dbReference type="PROSITE" id="PS50206">
    <property type="entry name" value="RHODANESE_3"/>
    <property type="match status" value="1"/>
</dbReference>
<dbReference type="PROSITE" id="PS51165">
    <property type="entry name" value="THUMP"/>
    <property type="match status" value="1"/>
</dbReference>